<evidence type="ECO:0000250" key="1"/>
<evidence type="ECO:0000250" key="2">
    <source>
        <dbReference type="UniProtKB" id="O23629"/>
    </source>
</evidence>
<evidence type="ECO:0000250" key="3">
    <source>
        <dbReference type="UniProtKB" id="Q9FFC0"/>
    </source>
</evidence>
<evidence type="ECO:0000250" key="4">
    <source>
        <dbReference type="UniProtKB" id="Q9LQQ4"/>
    </source>
</evidence>
<evidence type="ECO:0000250" key="5">
    <source>
        <dbReference type="UniProtKB" id="Q9LZT0"/>
    </source>
</evidence>
<evidence type="ECO:0000256" key="6">
    <source>
        <dbReference type="SAM" id="MobiDB-lite"/>
    </source>
</evidence>
<evidence type="ECO:0000305" key="7"/>
<name>H2B8_ARATH</name>
<dbReference type="EMBL" id="AL132966">
    <property type="protein sequence ID" value="CAB67672.1"/>
    <property type="molecule type" value="Genomic_DNA"/>
</dbReference>
<dbReference type="EMBL" id="CP002686">
    <property type="protein sequence ID" value="AEE79123.1"/>
    <property type="molecule type" value="Genomic_DNA"/>
</dbReference>
<dbReference type="PIR" id="T45905">
    <property type="entry name" value="T45905"/>
</dbReference>
<dbReference type="RefSeq" id="NP_001319739.1">
    <property type="nucleotide sequence ID" value="NM_001339625.1"/>
</dbReference>
<dbReference type="SMR" id="Q9LFF6"/>
<dbReference type="FunCoup" id="Q9LFF6">
    <property type="interactions" value="1427"/>
</dbReference>
<dbReference type="STRING" id="3702.Q9LFF6"/>
<dbReference type="iPTMnet" id="Q9LFF6"/>
<dbReference type="PaxDb" id="3702-AT3G53650.1"/>
<dbReference type="ProteomicsDB" id="230786"/>
<dbReference type="EnsemblPlants" id="AT3G53650.1">
    <property type="protein sequence ID" value="AT3G53650.1"/>
    <property type="gene ID" value="AT3G53650"/>
</dbReference>
<dbReference type="GeneID" id="28719403"/>
<dbReference type="Gramene" id="AT3G53650.1">
    <property type="protein sequence ID" value="AT3G53650.1"/>
    <property type="gene ID" value="AT3G53650"/>
</dbReference>
<dbReference type="KEGG" id="ath:AT3G53650"/>
<dbReference type="Araport" id="AT3G53650"/>
<dbReference type="TAIR" id="AT3G53650"/>
<dbReference type="eggNOG" id="KOG1744">
    <property type="taxonomic scope" value="Eukaryota"/>
</dbReference>
<dbReference type="HOGENOM" id="CLU_075666_1_0_1"/>
<dbReference type="InParanoid" id="Q9LFF6"/>
<dbReference type="OMA" id="CHKIVKT"/>
<dbReference type="PhylomeDB" id="Q9LFF6"/>
<dbReference type="CD-CODE" id="4299E36E">
    <property type="entry name" value="Nucleolus"/>
</dbReference>
<dbReference type="PRO" id="PR:Q9LFF6"/>
<dbReference type="Proteomes" id="UP000006548">
    <property type="component" value="Chromosome 3"/>
</dbReference>
<dbReference type="ExpressionAtlas" id="Q9LFF6">
    <property type="expression patterns" value="baseline and differential"/>
</dbReference>
<dbReference type="GO" id="GO:0000786">
    <property type="term" value="C:nucleosome"/>
    <property type="evidence" value="ECO:0007669"/>
    <property type="project" value="UniProtKB-KW"/>
</dbReference>
<dbReference type="GO" id="GO:0005634">
    <property type="term" value="C:nucleus"/>
    <property type="evidence" value="ECO:0007669"/>
    <property type="project" value="UniProtKB-SubCell"/>
</dbReference>
<dbReference type="GO" id="GO:0003677">
    <property type="term" value="F:DNA binding"/>
    <property type="evidence" value="ECO:0007669"/>
    <property type="project" value="UniProtKB-KW"/>
</dbReference>
<dbReference type="GO" id="GO:0046982">
    <property type="term" value="F:protein heterodimerization activity"/>
    <property type="evidence" value="ECO:0007669"/>
    <property type="project" value="InterPro"/>
</dbReference>
<dbReference type="GO" id="GO:0030527">
    <property type="term" value="F:structural constituent of chromatin"/>
    <property type="evidence" value="ECO:0007669"/>
    <property type="project" value="InterPro"/>
</dbReference>
<dbReference type="CDD" id="cd22910">
    <property type="entry name" value="HFD_H2B"/>
    <property type="match status" value="1"/>
</dbReference>
<dbReference type="FunFam" id="1.10.20.10:FF:000014">
    <property type="entry name" value="Histone H2B"/>
    <property type="match status" value="1"/>
</dbReference>
<dbReference type="Gene3D" id="1.10.20.10">
    <property type="entry name" value="Histone, subunit A"/>
    <property type="match status" value="1"/>
</dbReference>
<dbReference type="InterPro" id="IPR009072">
    <property type="entry name" value="Histone-fold"/>
</dbReference>
<dbReference type="InterPro" id="IPR007125">
    <property type="entry name" value="Histone_H2A/H2B/H3"/>
</dbReference>
<dbReference type="InterPro" id="IPR000558">
    <property type="entry name" value="Histone_H2B"/>
</dbReference>
<dbReference type="InterPro" id="IPR055333">
    <property type="entry name" value="HISTONE_H2B_site"/>
</dbReference>
<dbReference type="PANTHER" id="PTHR23428">
    <property type="entry name" value="HISTONE H2B"/>
    <property type="match status" value="1"/>
</dbReference>
<dbReference type="Pfam" id="PF00125">
    <property type="entry name" value="Histone"/>
    <property type="match status" value="1"/>
</dbReference>
<dbReference type="PRINTS" id="PR00621">
    <property type="entry name" value="HISTONEH2B"/>
</dbReference>
<dbReference type="SMART" id="SM00427">
    <property type="entry name" value="H2B"/>
    <property type="match status" value="1"/>
</dbReference>
<dbReference type="SUPFAM" id="SSF47113">
    <property type="entry name" value="Histone-fold"/>
    <property type="match status" value="1"/>
</dbReference>
<dbReference type="PROSITE" id="PS00357">
    <property type="entry name" value="HISTONE_H2B"/>
    <property type="match status" value="1"/>
</dbReference>
<accession>Q9LFF6</accession>
<gene>
    <name type="ordered locus">At3g53650</name>
    <name type="ORF">F4P12.350</name>
</gene>
<protein>
    <recommendedName>
        <fullName>Histone H2B.8</fullName>
    </recommendedName>
    <alternativeName>
        <fullName>HTB6</fullName>
    </alternativeName>
</protein>
<reference key="1">
    <citation type="journal article" date="2000" name="Nature">
        <title>Sequence and analysis of chromosome 3 of the plant Arabidopsis thaliana.</title>
        <authorList>
            <person name="Salanoubat M."/>
            <person name="Lemcke K."/>
            <person name="Rieger M."/>
            <person name="Ansorge W."/>
            <person name="Unseld M."/>
            <person name="Fartmann B."/>
            <person name="Valle G."/>
            <person name="Bloecker H."/>
            <person name="Perez-Alonso M."/>
            <person name="Obermaier B."/>
            <person name="Delseny M."/>
            <person name="Boutry M."/>
            <person name="Grivell L.A."/>
            <person name="Mache R."/>
            <person name="Puigdomenech P."/>
            <person name="De Simone V."/>
            <person name="Choisne N."/>
            <person name="Artiguenave F."/>
            <person name="Robert C."/>
            <person name="Brottier P."/>
            <person name="Wincker P."/>
            <person name="Cattolico L."/>
            <person name="Weissenbach J."/>
            <person name="Saurin W."/>
            <person name="Quetier F."/>
            <person name="Schaefer M."/>
            <person name="Mueller-Auer S."/>
            <person name="Gabel C."/>
            <person name="Fuchs M."/>
            <person name="Benes V."/>
            <person name="Wurmbach E."/>
            <person name="Drzonek H."/>
            <person name="Erfle H."/>
            <person name="Jordan N."/>
            <person name="Bangert S."/>
            <person name="Wiedelmann R."/>
            <person name="Kranz H."/>
            <person name="Voss H."/>
            <person name="Holland R."/>
            <person name="Brandt P."/>
            <person name="Nyakatura G."/>
            <person name="Vezzi A."/>
            <person name="D'Angelo M."/>
            <person name="Pallavicini A."/>
            <person name="Toppo S."/>
            <person name="Simionati B."/>
            <person name="Conrad A."/>
            <person name="Hornischer K."/>
            <person name="Kauer G."/>
            <person name="Loehnert T.-H."/>
            <person name="Nordsiek G."/>
            <person name="Reichelt J."/>
            <person name="Scharfe M."/>
            <person name="Schoen O."/>
            <person name="Bargues M."/>
            <person name="Terol J."/>
            <person name="Climent J."/>
            <person name="Navarro P."/>
            <person name="Collado C."/>
            <person name="Perez-Perez A."/>
            <person name="Ottenwaelder B."/>
            <person name="Duchemin D."/>
            <person name="Cooke R."/>
            <person name="Laudie M."/>
            <person name="Berger-Llauro C."/>
            <person name="Purnelle B."/>
            <person name="Masuy D."/>
            <person name="de Haan M."/>
            <person name="Maarse A.C."/>
            <person name="Alcaraz J.-P."/>
            <person name="Cottet A."/>
            <person name="Casacuberta E."/>
            <person name="Monfort A."/>
            <person name="Argiriou A."/>
            <person name="Flores M."/>
            <person name="Liguori R."/>
            <person name="Vitale D."/>
            <person name="Mannhaupt G."/>
            <person name="Haase D."/>
            <person name="Schoof H."/>
            <person name="Rudd S."/>
            <person name="Zaccaria P."/>
            <person name="Mewes H.-W."/>
            <person name="Mayer K.F.X."/>
            <person name="Kaul S."/>
            <person name="Town C.D."/>
            <person name="Koo H.L."/>
            <person name="Tallon L.J."/>
            <person name="Jenkins J."/>
            <person name="Rooney T."/>
            <person name="Rizzo M."/>
            <person name="Walts A."/>
            <person name="Utterback T."/>
            <person name="Fujii C.Y."/>
            <person name="Shea T.P."/>
            <person name="Creasy T.H."/>
            <person name="Haas B."/>
            <person name="Maiti R."/>
            <person name="Wu D."/>
            <person name="Peterson J."/>
            <person name="Van Aken S."/>
            <person name="Pai G."/>
            <person name="Militscher J."/>
            <person name="Sellers P."/>
            <person name="Gill J.E."/>
            <person name="Feldblyum T.V."/>
            <person name="Preuss D."/>
            <person name="Lin X."/>
            <person name="Nierman W.C."/>
            <person name="Salzberg S.L."/>
            <person name="White O."/>
            <person name="Venter J.C."/>
            <person name="Fraser C.M."/>
            <person name="Kaneko T."/>
            <person name="Nakamura Y."/>
            <person name="Sato S."/>
            <person name="Kato T."/>
            <person name="Asamizu E."/>
            <person name="Sasamoto S."/>
            <person name="Kimura T."/>
            <person name="Idesawa K."/>
            <person name="Kawashima K."/>
            <person name="Kishida Y."/>
            <person name="Kiyokawa C."/>
            <person name="Kohara M."/>
            <person name="Matsumoto M."/>
            <person name="Matsuno A."/>
            <person name="Muraki A."/>
            <person name="Nakayama S."/>
            <person name="Nakazaki N."/>
            <person name="Shinpo S."/>
            <person name="Takeuchi C."/>
            <person name="Wada T."/>
            <person name="Watanabe A."/>
            <person name="Yamada M."/>
            <person name="Yasuda M."/>
            <person name="Tabata S."/>
        </authorList>
    </citation>
    <scope>NUCLEOTIDE SEQUENCE [LARGE SCALE GENOMIC DNA]</scope>
    <source>
        <strain>cv. Columbia</strain>
    </source>
</reference>
<reference key="2">
    <citation type="journal article" date="2017" name="Plant J.">
        <title>Araport11: a complete reannotation of the Arabidopsis thaliana reference genome.</title>
        <authorList>
            <person name="Cheng C.Y."/>
            <person name="Krishnakumar V."/>
            <person name="Chan A.P."/>
            <person name="Thibaud-Nissen F."/>
            <person name="Schobel S."/>
            <person name="Town C.D."/>
        </authorList>
    </citation>
    <scope>GENOME REANNOTATION</scope>
    <source>
        <strain>cv. Columbia</strain>
    </source>
</reference>
<reference key="3">
    <citation type="journal article" date="2007" name="Nature">
        <title>Control of DNA methylation and heterochromatic silencing by histone H2B deubiquitination.</title>
        <authorList>
            <person name="Sridhar V.V."/>
            <person name="Kapoor A."/>
            <person name="Zhang K."/>
            <person name="Zhu J."/>
            <person name="Zhou T."/>
            <person name="Hasegawa P.M."/>
            <person name="Bressan R.A."/>
            <person name="Zhu J.-K."/>
        </authorList>
    </citation>
    <scope>UBIQUITINATION AT LYS-134</scope>
    <scope>IDENTIFICATION BY MASS SPECTROMETRY</scope>
</reference>
<proteinExistence type="evidence at protein level"/>
<keyword id="KW-0007">Acetylation</keyword>
<keyword id="KW-0158">Chromosome</keyword>
<keyword id="KW-0238">DNA-binding</keyword>
<keyword id="KW-1017">Isopeptide bond</keyword>
<keyword id="KW-0488">Methylation</keyword>
<keyword id="KW-0544">Nucleosome core</keyword>
<keyword id="KW-0539">Nucleus</keyword>
<keyword id="KW-1185">Reference proteome</keyword>
<keyword id="KW-0832">Ubl conjugation</keyword>
<organism>
    <name type="scientific">Arabidopsis thaliana</name>
    <name type="common">Mouse-ear cress</name>
    <dbReference type="NCBI Taxonomy" id="3702"/>
    <lineage>
        <taxon>Eukaryota</taxon>
        <taxon>Viridiplantae</taxon>
        <taxon>Streptophyta</taxon>
        <taxon>Embryophyta</taxon>
        <taxon>Tracheophyta</taxon>
        <taxon>Spermatophyta</taxon>
        <taxon>Magnoliopsida</taxon>
        <taxon>eudicotyledons</taxon>
        <taxon>Gunneridae</taxon>
        <taxon>Pentapetalae</taxon>
        <taxon>rosids</taxon>
        <taxon>malvids</taxon>
        <taxon>Brassicales</taxon>
        <taxon>Brassicaceae</taxon>
        <taxon>Camelineae</taxon>
        <taxon>Arabidopsis</taxon>
    </lineage>
</organism>
<sequence>MAPKAAEKKPAGKKPAEKAPAEKLPKAEKKITKEGGSEKKKKKSKKNIETYKIYIFKVLKQVHPDIGISGKAMGIMNSFINDIFEKLAQESSRLARYNKKPTITSREIQTAVRLVLPGELSKHAVSEGTKAVTKFTSS</sequence>
<comment type="function">
    <text>Core component of nucleosome. Nucleosomes wrap and compact DNA into chromatin, limiting DNA accessibility to the cellular machineries which require DNA as a template. Histones thereby play a central role in transcription regulation, DNA repair, DNA replication and chromosomal stability. DNA accessibility is regulated via a complex set of post-translational modifications of histones, also called histone code, and nucleosome remodeling.</text>
</comment>
<comment type="subunit">
    <text>The nucleosome is a histone octamer containing two molecules each of H2A, H2B, H3 and H4 assembled in one H3-H4 heterotetramer and two H2A-H2B heterodimers. The octamer wraps approximately 147 bp of DNA.</text>
</comment>
<comment type="subcellular location">
    <subcellularLocation>
        <location evidence="1">Nucleus</location>
    </subcellularLocation>
    <subcellularLocation>
        <location evidence="1">Chromosome</location>
    </subcellularLocation>
</comment>
<comment type="PTM">
    <text evidence="1">Can be acetylated to form H2BK6ac, H2BK33ac and H2BK34ac.</text>
</comment>
<comment type="PTM">
    <text>Monoubiquitinated by BRE1 to form H2BK143ub1 and deubiquitinated by UBP26. Required for heterochromatic histone H3 di- and trimethylation at H3K4me. May give a specific tag for epigenetic transcriptional activation.</text>
</comment>
<comment type="similarity">
    <text evidence="7">Belongs to the histone H2B family.</text>
</comment>
<comment type="caution">
    <text evidence="7">To ensure consistency between histone entries, we follow the 'Brno' nomenclature for histone modifications, with positions referring to those used in the literature for the 'closest' model organism. Due to slight variations in histone sequences between organisms and to the presence of initiator methionine in UniProtKB/Swiss-Prot sequences, the actual positions of modified amino acids in the sequence generally differ. In this entry the following conventions are used: H2BK6ac = acetylated Lys-8; H2BK33ac = acetylated Lys-29; H2BK34ac = acetylated Lys-30; H2BK143ub1 = monoubiquitinated Lys-134.</text>
</comment>
<feature type="initiator methionine" description="Removed" evidence="4">
    <location>
        <position position="1"/>
    </location>
</feature>
<feature type="chain" id="PRO_0000238695" description="Histone H2B.8">
    <location>
        <begin position="2"/>
        <end position="138"/>
    </location>
</feature>
<feature type="region of interest" description="Disordered" evidence="6">
    <location>
        <begin position="1"/>
        <end position="45"/>
    </location>
</feature>
<feature type="compositionally biased region" description="Basic and acidic residues" evidence="6">
    <location>
        <begin position="1"/>
        <end position="38"/>
    </location>
</feature>
<feature type="modified residue" description="N,N,N-trimethylalanine; alternate" evidence="4">
    <location>
        <position position="2"/>
    </location>
</feature>
<feature type="modified residue" description="N,N-dimethylalanine; alternate" evidence="4">
    <location>
        <position position="2"/>
    </location>
</feature>
<feature type="modified residue" description="N-methylalanine; alternate" evidence="4">
    <location>
        <position position="2"/>
    </location>
</feature>
<feature type="modified residue" description="N6-methyllysine" evidence="5">
    <location>
        <position position="4"/>
    </location>
</feature>
<feature type="modified residue" description="N6-acetyllysine" evidence="4">
    <location>
        <position position="8"/>
    </location>
</feature>
<feature type="modified residue" description="N6-acetyllysine" evidence="2">
    <location>
        <position position="13"/>
    </location>
</feature>
<feature type="modified residue" description="N6,N6-dimethyllysine" evidence="3">
    <location>
        <position position="14"/>
    </location>
</feature>
<feature type="modified residue" description="N6-acetyllysine" evidence="2">
    <location>
        <position position="18"/>
    </location>
</feature>
<feature type="modified residue" description="N6-acetyllysine" evidence="2">
    <location>
        <position position="23"/>
    </location>
</feature>
<feature type="modified residue" description="N6-acetyllysine" evidence="4">
    <location>
        <position position="29"/>
    </location>
</feature>
<feature type="modified residue" description="N6-acetyllysine" evidence="4">
    <location>
        <position position="30"/>
    </location>
</feature>
<feature type="cross-link" description="Glycyl lysine isopeptide (Lys-Gly) (interchain with G-Cter in ubiquitin)" evidence="4">
    <location>
        <position position="134"/>
    </location>
</feature>